<keyword id="KW-0138">CF(0)</keyword>
<keyword id="KW-0903">Direct protein sequencing</keyword>
<keyword id="KW-0375">Hydrogen ion transport</keyword>
<keyword id="KW-0406">Ion transport</keyword>
<keyword id="KW-0472">Membrane</keyword>
<keyword id="KW-0496">Mitochondrion</keyword>
<keyword id="KW-0999">Mitochondrion inner membrane</keyword>
<keyword id="KW-1185">Reference proteome</keyword>
<keyword id="KW-0813">Transport</keyword>
<organism>
    <name type="scientific">Spinacia oleracea</name>
    <name type="common">Spinach</name>
    <dbReference type="NCBI Taxonomy" id="3562"/>
    <lineage>
        <taxon>Eukaryota</taxon>
        <taxon>Viridiplantae</taxon>
        <taxon>Streptophyta</taxon>
        <taxon>Embryophyta</taxon>
        <taxon>Tracheophyta</taxon>
        <taxon>Spermatophyta</taxon>
        <taxon>Magnoliopsida</taxon>
        <taxon>eudicotyledons</taxon>
        <taxon>Gunneridae</taxon>
        <taxon>Pentapetalae</taxon>
        <taxon>Caryophyllales</taxon>
        <taxon>Chenopodiaceae</taxon>
        <taxon>Chenopodioideae</taxon>
        <taxon>Anserineae</taxon>
        <taxon>Spinacia</taxon>
    </lineage>
</organism>
<feature type="chain" id="PRO_0000071722" description="ATP synthase 28 kDa subunit, mitochondrial">
    <location>
        <begin position="1"/>
        <end position="32" status="greater than"/>
    </location>
</feature>
<feature type="non-terminal residue">
    <location>
        <position position="32"/>
    </location>
</feature>
<protein>
    <recommendedName>
        <fullName>ATP synthase 28 kDa subunit, mitochondrial</fullName>
    </recommendedName>
</protein>
<comment type="function">
    <text>Mitochondrial membrane ATP synthase (F(1)F(0) ATP synthase or Complex V) produces ATP from ADP in the presence of a proton gradient across the membrane which is generated by electron transport complexes of the respiratory chain. F-type ATPases consist of two structural domains, F(1) - containing the extramembraneous catalytic core and F(0) - containing the membrane proton channel, linked together by a central stalk and a peripheral stalk. During catalysis, ATP synthesis in the catalytic domain of F(1) is coupled via a rotary mechanism of the central stalk subunits to proton translocation. Part of the complex F(0) domain.</text>
</comment>
<comment type="subcellular location">
    <subcellularLocation>
        <location>Mitochondrion</location>
    </subcellularLocation>
    <subcellularLocation>
        <location>Mitochondrion inner membrane</location>
    </subcellularLocation>
</comment>
<proteinExistence type="evidence at protein level"/>
<reference key="1">
    <citation type="journal article" date="1992" name="Eur. J. Biochem.">
        <title>Plant mitochondrial F0F1 ATP synthase. Identification of the individual subunits and properties of the purified spinach leaf mitochondrial ATP synthase.</title>
        <authorList>
            <person name="Hamasur B."/>
            <person name="Glaser E."/>
        </authorList>
    </citation>
    <scope>PROTEIN SEQUENCE</scope>
    <source>
        <strain>cv. Medania</strain>
        <tissue>Leaf mesophyll</tissue>
    </source>
</reference>
<sequence length="32" mass="3527">TKXXEAPAPKGLKGNEMLKGIFLEVKKKFETA</sequence>
<dbReference type="PIR" id="S21245">
    <property type="entry name" value="S21245"/>
</dbReference>
<dbReference type="Proteomes" id="UP001155700">
    <property type="component" value="Unplaced"/>
</dbReference>
<dbReference type="GO" id="GO:0005743">
    <property type="term" value="C:mitochondrial inner membrane"/>
    <property type="evidence" value="ECO:0007669"/>
    <property type="project" value="UniProtKB-SubCell"/>
</dbReference>
<dbReference type="GO" id="GO:0045259">
    <property type="term" value="C:proton-transporting ATP synthase complex"/>
    <property type="evidence" value="ECO:0007669"/>
    <property type="project" value="UniProtKB-KW"/>
</dbReference>
<dbReference type="GO" id="GO:1902600">
    <property type="term" value="P:proton transmembrane transport"/>
    <property type="evidence" value="ECO:0007669"/>
    <property type="project" value="UniProtKB-KW"/>
</dbReference>
<accession>P80088</accession>
<name>ATP7_SPIOL</name>